<evidence type="ECO:0000255" key="1">
    <source>
        <dbReference type="HAMAP-Rule" id="MF_00528"/>
    </source>
</evidence>
<comment type="function">
    <text evidence="1">Nucleoside triphosphate pyrophosphatase that hydrolyzes dTTP and UTP. May have a dual role in cell division arrest and in preventing the incorporation of modified nucleotides into cellular nucleic acids.</text>
</comment>
<comment type="catalytic activity">
    <reaction evidence="1">
        <text>dTTP + H2O = dTMP + diphosphate + H(+)</text>
        <dbReference type="Rhea" id="RHEA:28534"/>
        <dbReference type="ChEBI" id="CHEBI:15377"/>
        <dbReference type="ChEBI" id="CHEBI:15378"/>
        <dbReference type="ChEBI" id="CHEBI:33019"/>
        <dbReference type="ChEBI" id="CHEBI:37568"/>
        <dbReference type="ChEBI" id="CHEBI:63528"/>
        <dbReference type="EC" id="3.6.1.9"/>
    </reaction>
</comment>
<comment type="catalytic activity">
    <reaction evidence="1">
        <text>UTP + H2O = UMP + diphosphate + H(+)</text>
        <dbReference type="Rhea" id="RHEA:29395"/>
        <dbReference type="ChEBI" id="CHEBI:15377"/>
        <dbReference type="ChEBI" id="CHEBI:15378"/>
        <dbReference type="ChEBI" id="CHEBI:33019"/>
        <dbReference type="ChEBI" id="CHEBI:46398"/>
        <dbReference type="ChEBI" id="CHEBI:57865"/>
        <dbReference type="EC" id="3.6.1.9"/>
    </reaction>
</comment>
<comment type="cofactor">
    <cofactor evidence="1">
        <name>a divalent metal cation</name>
        <dbReference type="ChEBI" id="CHEBI:60240"/>
    </cofactor>
</comment>
<comment type="subcellular location">
    <subcellularLocation>
        <location evidence="1">Cytoplasm</location>
    </subcellularLocation>
</comment>
<comment type="similarity">
    <text evidence="1">Belongs to the Maf family. YhdE subfamily.</text>
</comment>
<name>NTPPA_GLOVI</name>
<organism>
    <name type="scientific">Gloeobacter violaceus (strain ATCC 29082 / PCC 7421)</name>
    <dbReference type="NCBI Taxonomy" id="251221"/>
    <lineage>
        <taxon>Bacteria</taxon>
        <taxon>Bacillati</taxon>
        <taxon>Cyanobacteriota</taxon>
        <taxon>Cyanophyceae</taxon>
        <taxon>Gloeobacterales</taxon>
        <taxon>Gloeobacteraceae</taxon>
        <taxon>Gloeobacter</taxon>
    </lineage>
</organism>
<feature type="chain" id="PRO_0000123022" description="dTTP/UTP pyrophosphatase">
    <location>
        <begin position="1"/>
        <end position="190"/>
    </location>
</feature>
<feature type="active site" description="Proton acceptor" evidence="1">
    <location>
        <position position="70"/>
    </location>
</feature>
<feature type="site" description="Important for substrate specificity" evidence="1">
    <location>
        <position position="13"/>
    </location>
</feature>
<feature type="site" description="Important for substrate specificity" evidence="1">
    <location>
        <position position="71"/>
    </location>
</feature>
<feature type="site" description="Important for substrate specificity" evidence="1">
    <location>
        <position position="153"/>
    </location>
</feature>
<gene>
    <name type="ordered locus">glr2715</name>
</gene>
<accession>Q7NH22</accession>
<protein>
    <recommendedName>
        <fullName evidence="1">dTTP/UTP pyrophosphatase</fullName>
        <shortName evidence="1">dTTPase/UTPase</shortName>
        <ecNumber evidence="1">3.6.1.9</ecNumber>
    </recommendedName>
    <alternativeName>
        <fullName evidence="1">Nucleoside triphosphate pyrophosphatase</fullName>
    </alternativeName>
    <alternativeName>
        <fullName evidence="1">Nucleotide pyrophosphatase</fullName>
        <shortName evidence="1">Nucleotide PPase</shortName>
    </alternativeName>
</protein>
<reference key="1">
    <citation type="journal article" date="2003" name="DNA Res.">
        <title>Complete genome structure of Gloeobacter violaceus PCC 7421, a cyanobacterium that lacks thylakoids.</title>
        <authorList>
            <person name="Nakamura Y."/>
            <person name="Kaneko T."/>
            <person name="Sato S."/>
            <person name="Mimuro M."/>
            <person name="Miyashita H."/>
            <person name="Tsuchiya T."/>
            <person name="Sasamoto S."/>
            <person name="Watanabe A."/>
            <person name="Kawashima K."/>
            <person name="Kishida Y."/>
            <person name="Kiyokawa C."/>
            <person name="Kohara M."/>
            <person name="Matsumoto M."/>
            <person name="Matsuno A."/>
            <person name="Nakazaki N."/>
            <person name="Shimpo S."/>
            <person name="Takeuchi C."/>
            <person name="Yamada M."/>
            <person name="Tabata S."/>
        </authorList>
    </citation>
    <scope>NUCLEOTIDE SEQUENCE [LARGE SCALE GENOMIC DNA]</scope>
    <source>
        <strain>ATCC 29082 / PCC 7421</strain>
    </source>
</reference>
<sequence length="190" mass="20692">MTVRLLLASASPRRRELLSQIGVAFEVKPSAFEERMDPALPPEQLVVQNALGKALNVQKRAPAELILGADTVVVFNRRIYGKPTGPADAGRMLGELQGQWHTVYTGIALVEERRWRVAERATRVKLRAMTPAQIAAYVAGGEPLDKAGSYAIQGLGAALVEQIDGCYSNVVGLSLPLLVDLLAEFDRRVF</sequence>
<proteinExistence type="inferred from homology"/>
<dbReference type="EC" id="3.6.1.9" evidence="1"/>
<dbReference type="EMBL" id="BA000045">
    <property type="protein sequence ID" value="BAC90656.1"/>
    <property type="molecule type" value="Genomic_DNA"/>
</dbReference>
<dbReference type="RefSeq" id="NP_925661.1">
    <property type="nucleotide sequence ID" value="NC_005125.1"/>
</dbReference>
<dbReference type="RefSeq" id="WP_011142709.1">
    <property type="nucleotide sequence ID" value="NC_005125.1"/>
</dbReference>
<dbReference type="SMR" id="Q7NH22"/>
<dbReference type="FunCoup" id="Q7NH22">
    <property type="interactions" value="214"/>
</dbReference>
<dbReference type="STRING" id="251221.gene:10760217"/>
<dbReference type="EnsemblBacteria" id="BAC90656">
    <property type="protein sequence ID" value="BAC90656"/>
    <property type="gene ID" value="BAC90656"/>
</dbReference>
<dbReference type="KEGG" id="gvi:glr2715"/>
<dbReference type="PATRIC" id="fig|251221.4.peg.2742"/>
<dbReference type="eggNOG" id="COG0424">
    <property type="taxonomic scope" value="Bacteria"/>
</dbReference>
<dbReference type="HOGENOM" id="CLU_040416_0_0_3"/>
<dbReference type="InParanoid" id="Q7NH22"/>
<dbReference type="OrthoDB" id="9807767at2"/>
<dbReference type="PhylomeDB" id="Q7NH22"/>
<dbReference type="Proteomes" id="UP000000557">
    <property type="component" value="Chromosome"/>
</dbReference>
<dbReference type="GO" id="GO:0005737">
    <property type="term" value="C:cytoplasm"/>
    <property type="evidence" value="ECO:0007669"/>
    <property type="project" value="UniProtKB-SubCell"/>
</dbReference>
<dbReference type="GO" id="GO:0036218">
    <property type="term" value="F:dTTP diphosphatase activity"/>
    <property type="evidence" value="ECO:0007669"/>
    <property type="project" value="RHEA"/>
</dbReference>
<dbReference type="GO" id="GO:0047429">
    <property type="term" value="F:nucleoside triphosphate diphosphatase activity"/>
    <property type="evidence" value="ECO:0000318"/>
    <property type="project" value="GO_Central"/>
</dbReference>
<dbReference type="GO" id="GO:0036221">
    <property type="term" value="F:UTP diphosphatase activity"/>
    <property type="evidence" value="ECO:0007669"/>
    <property type="project" value="RHEA"/>
</dbReference>
<dbReference type="GO" id="GO:0009117">
    <property type="term" value="P:nucleotide metabolic process"/>
    <property type="evidence" value="ECO:0007669"/>
    <property type="project" value="UniProtKB-KW"/>
</dbReference>
<dbReference type="CDD" id="cd00555">
    <property type="entry name" value="Maf"/>
    <property type="match status" value="1"/>
</dbReference>
<dbReference type="FunFam" id="3.90.950.10:FF:000005">
    <property type="entry name" value="7-methyl-GTP pyrophosphatase"/>
    <property type="match status" value="1"/>
</dbReference>
<dbReference type="Gene3D" id="3.90.950.10">
    <property type="match status" value="1"/>
</dbReference>
<dbReference type="HAMAP" id="MF_00528">
    <property type="entry name" value="Maf"/>
    <property type="match status" value="1"/>
</dbReference>
<dbReference type="InterPro" id="IPR029001">
    <property type="entry name" value="ITPase-like_fam"/>
</dbReference>
<dbReference type="InterPro" id="IPR003697">
    <property type="entry name" value="Maf-like"/>
</dbReference>
<dbReference type="NCBIfam" id="TIGR00172">
    <property type="entry name" value="maf"/>
    <property type="match status" value="1"/>
</dbReference>
<dbReference type="PANTHER" id="PTHR43213">
    <property type="entry name" value="BIFUNCTIONAL DTTP/UTP PYROPHOSPHATASE/METHYLTRANSFERASE PROTEIN-RELATED"/>
    <property type="match status" value="1"/>
</dbReference>
<dbReference type="PANTHER" id="PTHR43213:SF5">
    <property type="entry name" value="BIFUNCTIONAL DTTP_UTP PYROPHOSPHATASE_METHYLTRANSFERASE PROTEIN-RELATED"/>
    <property type="match status" value="1"/>
</dbReference>
<dbReference type="Pfam" id="PF02545">
    <property type="entry name" value="Maf"/>
    <property type="match status" value="1"/>
</dbReference>
<dbReference type="PIRSF" id="PIRSF006305">
    <property type="entry name" value="Maf"/>
    <property type="match status" value="1"/>
</dbReference>
<dbReference type="SUPFAM" id="SSF52972">
    <property type="entry name" value="ITPase-like"/>
    <property type="match status" value="1"/>
</dbReference>
<keyword id="KW-0963">Cytoplasm</keyword>
<keyword id="KW-0378">Hydrolase</keyword>
<keyword id="KW-0546">Nucleotide metabolism</keyword>
<keyword id="KW-1185">Reference proteome</keyword>